<sequence length="260" mass="27311">MSEARHNPVLAGQTAVITGGASGIGKSIVQRFLEAGASCLAADLNEEALAALKQELAEYGDKLDVVKVDVSNRDDVEGMVDRAVQTFGQMDIIVNNAGIMDNLLPIAEMDDDVWERLMKVNLNSVMYGTRKAVRYFMERGEGGVIINTASLSGLCAGRGGCAYTASKFAVVGLTKNVAFMYADTGIRCNAICPGNTQTNIGVGMRQPSERGMAKATTGYAGATRSGTPEEISAAAAFLASDQAGFINGETLTIDGGWSAY</sequence>
<comment type="function">
    <text evidence="3">Involved in the modification of secondary bile acids into iso-bile acids (3beta-bile acids) via epimerization of the 3-OH group through a 3-oxo-intermediate. Catalyzes the reduction of 12-alpha-hydroxy-3-oxo-5-beta-cholan-24-oate (3-oxo-DCA) and 3-oxo-5-beta-cholan-24-oate (3-oxo-LCA) to yield isodeoxycholate (isoDCA) and isolithocholate (isoLCA), respectively. Is also able to catalyze the reduction of 3-dehydrocholate (3-oxo-CA or 7alpha,12alpha-dihydroxy-3-oxo-5beta-cholan-24-oate) and 7-alpha-hydroxy-3-oxo-5-beta-cholan-24-oate (3-oxo-CDCA), into isocholate (isoCA) and isochenodeoxycholate (isoCDCA), respectively. Accepts both NADH and NADPH as cosubstrates. The conversion of the abundant bile acid deoxycholate (DCA) into isoDCA by the gut bacterium E.lenta favors the growth of the keystone commensal genus Bacteroides, since isoDCA is less cytotoxic than its parent compound, DCA; iso-bile acids have thus a potential role in modulating gut community composition.</text>
</comment>
<comment type="catalytic activity">
    <reaction evidence="3">
        <text>3-oxo-5beta-cholan-24-oate + NADH + H(+) = isolithocholate + NAD(+)</text>
        <dbReference type="Rhea" id="RHEA:47508"/>
        <dbReference type="ChEBI" id="CHEBI:11867"/>
        <dbReference type="ChEBI" id="CHEBI:15378"/>
        <dbReference type="ChEBI" id="CHEBI:57540"/>
        <dbReference type="ChEBI" id="CHEBI:57945"/>
        <dbReference type="ChEBI" id="CHEBI:87728"/>
        <dbReference type="EC" id="1.1.1.391"/>
    </reaction>
    <physiologicalReaction direction="left-to-right" evidence="6">
        <dbReference type="Rhea" id="RHEA:47509"/>
    </physiologicalReaction>
</comment>
<comment type="catalytic activity">
    <reaction evidence="3">
        <text>12alpha-hydroxy-3-oxo-5beta-cholan-24-oate + NADH + H(+) = isodeoxycholate + NAD(+)</text>
        <dbReference type="Rhea" id="RHEA:47492"/>
        <dbReference type="ChEBI" id="CHEBI:15378"/>
        <dbReference type="ChEBI" id="CHEBI:57540"/>
        <dbReference type="ChEBI" id="CHEBI:57945"/>
        <dbReference type="ChEBI" id="CHEBI:87733"/>
        <dbReference type="ChEBI" id="CHEBI:87734"/>
    </reaction>
    <physiologicalReaction direction="left-to-right" evidence="6">
        <dbReference type="Rhea" id="RHEA:47493"/>
    </physiologicalReaction>
</comment>
<comment type="catalytic activity">
    <reaction evidence="3">
        <text>12alpha-hydroxy-3-oxo-5beta-cholan-24-oate + NADPH + H(+) = isodeoxycholate + NADP(+)</text>
        <dbReference type="Rhea" id="RHEA:47488"/>
        <dbReference type="ChEBI" id="CHEBI:15378"/>
        <dbReference type="ChEBI" id="CHEBI:57783"/>
        <dbReference type="ChEBI" id="CHEBI:58349"/>
        <dbReference type="ChEBI" id="CHEBI:87733"/>
        <dbReference type="ChEBI" id="CHEBI:87734"/>
    </reaction>
    <physiologicalReaction direction="left-to-right" evidence="6">
        <dbReference type="Rhea" id="RHEA:47489"/>
    </physiologicalReaction>
</comment>
<comment type="catalytic activity">
    <reaction evidence="3">
        <text>7alpha,12alpha-dihydroxy-3-oxo-5beta-cholan-24-oate + NADH + H(+) = isocholate + NAD(+)</text>
        <dbReference type="Rhea" id="RHEA:47512"/>
        <dbReference type="ChEBI" id="CHEBI:15378"/>
        <dbReference type="ChEBI" id="CHEBI:57540"/>
        <dbReference type="ChEBI" id="CHEBI:57945"/>
        <dbReference type="ChEBI" id="CHEBI:87735"/>
        <dbReference type="ChEBI" id="CHEBI:87736"/>
    </reaction>
    <physiologicalReaction direction="left-to-right" evidence="6">
        <dbReference type="Rhea" id="RHEA:47513"/>
    </physiologicalReaction>
</comment>
<comment type="catalytic activity">
    <reaction evidence="3">
        <text>3-oxochenodeoxycholate + NADH + H(+) = isochenodeoxycholate + NAD(+)</text>
        <dbReference type="Rhea" id="RHEA:47516"/>
        <dbReference type="ChEBI" id="CHEBI:15378"/>
        <dbReference type="ChEBI" id="CHEBI:57540"/>
        <dbReference type="ChEBI" id="CHEBI:57945"/>
        <dbReference type="ChEBI" id="CHEBI:87730"/>
        <dbReference type="ChEBI" id="CHEBI:87731"/>
    </reaction>
    <physiologicalReaction direction="left-to-right" evidence="6">
        <dbReference type="Rhea" id="RHEA:47517"/>
    </physiologicalReaction>
</comment>
<comment type="biophysicochemical properties">
    <kinetics>
        <KM evidence="3">2630 uM for 12alpha-hydroxy-3-oxo-5beta-cholan-24-oate</KM>
        <text evidence="3">kcat is 1750 min(-1) with 12alpha-hydroxy-3-oxo-5beta-cholan-24-oate as substrate.</text>
    </kinetics>
</comment>
<comment type="similarity">
    <text evidence="5">Belongs to the short-chain dehydrogenases/reductases (SDR) family.</text>
</comment>
<accession>C8WGQ3</accession>
<keyword id="KW-0443">Lipid metabolism</keyword>
<keyword id="KW-0520">NAD</keyword>
<keyword id="KW-0560">Oxidoreductase</keyword>
<keyword id="KW-1185">Reference proteome</keyword>
<keyword id="KW-0753">Steroid metabolism</keyword>
<protein>
    <recommendedName>
        <fullName evidence="4">3beta-hydroxysteroid dehydrogenase 2</fullName>
        <shortName evidence="4">3beta-HSDH 2</shortName>
        <ecNumber evidence="3">1.1.1.-</ecNumber>
    </recommendedName>
    <alternativeName>
        <fullName>3beta-hydroxycholanate 3-dehydrogenase (NAD(+)) 2</fullName>
        <ecNumber evidence="3">1.1.1.391</ecNumber>
    </alternativeName>
    <alternativeName>
        <fullName evidence="5">NAD-dependent bile acid 3beta-dehydrogenase</fullName>
    </alternativeName>
</protein>
<name>3BHD2_EGGLE</name>
<feature type="chain" id="PRO_0000443428" description="3beta-hydroxysteroid dehydrogenase 2">
    <location>
        <begin position="1"/>
        <end position="260"/>
    </location>
</feature>
<feature type="active site" description="Proton acceptor" evidence="2">
    <location>
        <position position="163"/>
    </location>
</feature>
<feature type="binding site" evidence="1">
    <location>
        <position position="43"/>
    </location>
    <ligand>
        <name>NAD(+)</name>
        <dbReference type="ChEBI" id="CHEBI:57540"/>
    </ligand>
</feature>
<feature type="binding site" evidence="1">
    <location>
        <begin position="69"/>
        <end position="70"/>
    </location>
    <ligand>
        <name>NAD(+)</name>
        <dbReference type="ChEBI" id="CHEBI:57540"/>
    </ligand>
</feature>
<feature type="binding site" evidence="1">
    <location>
        <position position="96"/>
    </location>
    <ligand>
        <name>NAD(+)</name>
        <dbReference type="ChEBI" id="CHEBI:57540"/>
    </ligand>
</feature>
<feature type="binding site" evidence="1">
    <location>
        <position position="163"/>
    </location>
    <ligand>
        <name>NAD(+)</name>
        <dbReference type="ChEBI" id="CHEBI:57540"/>
    </ligand>
</feature>
<feature type="binding site" evidence="1">
    <location>
        <position position="167"/>
    </location>
    <ligand>
        <name>NAD(+)</name>
        <dbReference type="ChEBI" id="CHEBI:57540"/>
    </ligand>
</feature>
<evidence type="ECO:0000250" key="1">
    <source>
        <dbReference type="UniProtKB" id="Q9ZNN8"/>
    </source>
</evidence>
<evidence type="ECO:0000255" key="2">
    <source>
        <dbReference type="PROSITE-ProRule" id="PRU10001"/>
    </source>
</evidence>
<evidence type="ECO:0000269" key="3">
    <source>
    </source>
</evidence>
<evidence type="ECO:0000303" key="4">
    <source>
    </source>
</evidence>
<evidence type="ECO:0000305" key="5"/>
<evidence type="ECO:0000305" key="6">
    <source>
    </source>
</evidence>
<evidence type="ECO:0000312" key="7">
    <source>
        <dbReference type="EMBL" id="ACV55294.1"/>
    </source>
</evidence>
<evidence type="ECO:0000312" key="8">
    <source>
        <dbReference type="Proteomes" id="UP000001377"/>
    </source>
</evidence>
<gene>
    <name evidence="7" type="ordered locus">Elen_1325</name>
</gene>
<dbReference type="EC" id="1.1.1.-" evidence="3"/>
<dbReference type="EC" id="1.1.1.391" evidence="3"/>
<dbReference type="EMBL" id="CP001726">
    <property type="protein sequence ID" value="ACV55294.1"/>
    <property type="molecule type" value="Genomic_DNA"/>
</dbReference>
<dbReference type="RefSeq" id="WP_015760525.1">
    <property type="nucleotide sequence ID" value="NC_013204.1"/>
</dbReference>
<dbReference type="SMR" id="C8WGQ3"/>
<dbReference type="STRING" id="479437.Elen_1325"/>
<dbReference type="SwissLipids" id="SLP:000001343"/>
<dbReference type="PaxDb" id="479437-Elen_1325"/>
<dbReference type="KEGG" id="ele:Elen_1325"/>
<dbReference type="eggNOG" id="COG1028">
    <property type="taxonomic scope" value="Bacteria"/>
</dbReference>
<dbReference type="HOGENOM" id="CLU_010194_1_0_11"/>
<dbReference type="OrthoDB" id="5290708at2"/>
<dbReference type="BioCyc" id="ELEN479437:G1GFY-1333-MONOMER"/>
<dbReference type="BRENDA" id="1.1.1.391">
    <property type="organism ID" value="2185"/>
</dbReference>
<dbReference type="Proteomes" id="UP000001377">
    <property type="component" value="Chromosome"/>
</dbReference>
<dbReference type="GO" id="GO:0016616">
    <property type="term" value="F:oxidoreductase activity, acting on the CH-OH group of donors, NAD or NADP as acceptor"/>
    <property type="evidence" value="ECO:0000314"/>
    <property type="project" value="UniProt"/>
</dbReference>
<dbReference type="GO" id="GO:0008206">
    <property type="term" value="P:bile acid metabolic process"/>
    <property type="evidence" value="ECO:0000314"/>
    <property type="project" value="UniProt"/>
</dbReference>
<dbReference type="CDD" id="cd05233">
    <property type="entry name" value="SDR_c"/>
    <property type="match status" value="1"/>
</dbReference>
<dbReference type="FunFam" id="3.40.50.720:FF:000084">
    <property type="entry name" value="Short-chain dehydrogenase reductase"/>
    <property type="match status" value="1"/>
</dbReference>
<dbReference type="Gene3D" id="3.40.50.720">
    <property type="entry name" value="NAD(P)-binding Rossmann-like Domain"/>
    <property type="match status" value="1"/>
</dbReference>
<dbReference type="InterPro" id="IPR036291">
    <property type="entry name" value="NAD(P)-bd_dom_sf"/>
</dbReference>
<dbReference type="InterPro" id="IPR020904">
    <property type="entry name" value="Sc_DH/Rdtase_CS"/>
</dbReference>
<dbReference type="InterPro" id="IPR002347">
    <property type="entry name" value="SDR_fam"/>
</dbReference>
<dbReference type="NCBIfam" id="NF005559">
    <property type="entry name" value="PRK07231.1"/>
    <property type="match status" value="1"/>
</dbReference>
<dbReference type="PANTHER" id="PTHR43180">
    <property type="entry name" value="3-OXOACYL-(ACYL-CARRIER-PROTEIN) REDUCTASE (AFU_ORTHOLOGUE AFUA_6G11210)"/>
    <property type="match status" value="1"/>
</dbReference>
<dbReference type="PANTHER" id="PTHR43180:SF28">
    <property type="entry name" value="NAD(P)-BINDING ROSSMANN-FOLD SUPERFAMILY PROTEIN"/>
    <property type="match status" value="1"/>
</dbReference>
<dbReference type="Pfam" id="PF13561">
    <property type="entry name" value="adh_short_C2"/>
    <property type="match status" value="1"/>
</dbReference>
<dbReference type="PRINTS" id="PR00081">
    <property type="entry name" value="GDHRDH"/>
</dbReference>
<dbReference type="PRINTS" id="PR00080">
    <property type="entry name" value="SDRFAMILY"/>
</dbReference>
<dbReference type="SUPFAM" id="SSF51735">
    <property type="entry name" value="NAD(P)-binding Rossmann-fold domains"/>
    <property type="match status" value="1"/>
</dbReference>
<dbReference type="PROSITE" id="PS00061">
    <property type="entry name" value="ADH_SHORT"/>
    <property type="match status" value="1"/>
</dbReference>
<proteinExistence type="evidence at protein level"/>
<organism>
    <name type="scientific">Eggerthella lenta (strain ATCC 25559 / DSM 2243 / CCUG 17323 / JCM 9979 / KCTC 3265 / NCTC 11813 / VPI 0255 / 1899 B)</name>
    <name type="common">Eubacterium lentum</name>
    <dbReference type="NCBI Taxonomy" id="479437"/>
    <lineage>
        <taxon>Bacteria</taxon>
        <taxon>Bacillati</taxon>
        <taxon>Actinomycetota</taxon>
        <taxon>Coriobacteriia</taxon>
        <taxon>Eggerthellales</taxon>
        <taxon>Eggerthellaceae</taxon>
        <taxon>Eggerthella</taxon>
    </lineage>
</organism>
<reference key="1">
    <citation type="journal article" date="2009" name="Stand. Genomic Sci.">
        <title>Complete genome sequence of Eggerthella lenta type strain (IPP VPI 0255).</title>
        <authorList>
            <person name="Saunders E."/>
            <person name="Pukall R."/>
            <person name="Abt B."/>
            <person name="Lapidus A."/>
            <person name="Glavina Del Rio T."/>
            <person name="Copeland A."/>
            <person name="Tice H."/>
            <person name="Cheng J.F."/>
            <person name="Lucas S."/>
            <person name="Chen F."/>
            <person name="Nolan M."/>
            <person name="Bruce D."/>
            <person name="Goodwin L."/>
            <person name="Pitluck S."/>
            <person name="Ivanova N."/>
            <person name="Mavromatis K."/>
            <person name="Ovchinnikova G."/>
            <person name="Pati A."/>
            <person name="Chen A."/>
            <person name="Palaniappan K."/>
            <person name="Land M."/>
            <person name="Hauser L."/>
            <person name="Chang Y.J."/>
            <person name="Jeffries C.D."/>
            <person name="Chain P."/>
            <person name="Meincke L."/>
            <person name="Sims D."/>
            <person name="Brettin T."/>
            <person name="Detter J.C."/>
            <person name="Goker M."/>
            <person name="Bristow J."/>
            <person name="Eisen J.A."/>
            <person name="Markowitz V."/>
            <person name="Hugenholtz P."/>
            <person name="Kyrpides N.C."/>
            <person name="Klenk H.P."/>
            <person name="Han C."/>
        </authorList>
    </citation>
    <scope>NUCLEOTIDE SEQUENCE [LARGE SCALE GENOMIC DNA]</scope>
    <source>
        <strain evidence="8">ATCC 25559 / DSM 2243 / CCUG 17323 / JCM 9979 / KCTC 3265 / NCTC 11813 / VPI 0255 / 1899 B</strain>
    </source>
</reference>
<reference key="2">
    <citation type="journal article" date="2015" name="Nat. Chem. Biol.">
        <title>A biosynthetic pathway for a prominent class of microbiota-derived bile acids.</title>
        <authorList>
            <person name="Devlin A.S."/>
            <person name="Fischbach M.A."/>
        </authorList>
    </citation>
    <scope>FUNCTION</scope>
    <scope>CATALYTIC ACTIVITY</scope>
    <scope>BIOPHYSICOCHEMICAL PROPERTIES</scope>
    <scope>SUBSTRATE SPECIFICITY</scope>
    <source>
        <strain>ATCC 25559 / DSM 2243 / CCUG 17323 / JCM 9979 / KCTC 3265 / NCTC 11813 / VPI 0255 / 1899 B</strain>
    </source>
</reference>